<feature type="chain" id="PRO_1000186747" description="Fe/S biogenesis protein NfuA">
    <location>
        <begin position="1"/>
        <end position="191"/>
    </location>
</feature>
<feature type="binding site" evidence="1">
    <location>
        <position position="149"/>
    </location>
    <ligand>
        <name>[4Fe-4S] cluster</name>
        <dbReference type="ChEBI" id="CHEBI:49883"/>
    </ligand>
</feature>
<feature type="binding site" evidence="1">
    <location>
        <position position="152"/>
    </location>
    <ligand>
        <name>[4Fe-4S] cluster</name>
        <dbReference type="ChEBI" id="CHEBI:49883"/>
    </ligand>
</feature>
<name>NFUA_ECO81</name>
<protein>
    <recommendedName>
        <fullName evidence="1">Fe/S biogenesis protein NfuA</fullName>
    </recommendedName>
</protein>
<comment type="function">
    <text evidence="1">Involved in iron-sulfur cluster biogenesis. Binds a 4Fe-4S cluster, can transfer this cluster to apoproteins, and thereby intervenes in the maturation of Fe/S proteins. Could also act as a scaffold/chaperone for damaged Fe/S proteins.</text>
</comment>
<comment type="cofactor">
    <cofactor evidence="1">
        <name>[4Fe-4S] cluster</name>
        <dbReference type="ChEBI" id="CHEBI:49883"/>
    </cofactor>
    <text evidence="1">Binds 1 [4Fe-4S] cluster per subunit. The cluster is presumably bound at the interface of two monomers.</text>
</comment>
<comment type="subunit">
    <text evidence="1">Homodimer.</text>
</comment>
<comment type="similarity">
    <text evidence="1">Belongs to the NfuA family.</text>
</comment>
<reference key="1">
    <citation type="journal article" date="2009" name="PLoS Genet.">
        <title>Organised genome dynamics in the Escherichia coli species results in highly diverse adaptive paths.</title>
        <authorList>
            <person name="Touchon M."/>
            <person name="Hoede C."/>
            <person name="Tenaillon O."/>
            <person name="Barbe V."/>
            <person name="Baeriswyl S."/>
            <person name="Bidet P."/>
            <person name="Bingen E."/>
            <person name="Bonacorsi S."/>
            <person name="Bouchier C."/>
            <person name="Bouvet O."/>
            <person name="Calteau A."/>
            <person name="Chiapello H."/>
            <person name="Clermont O."/>
            <person name="Cruveiller S."/>
            <person name="Danchin A."/>
            <person name="Diard M."/>
            <person name="Dossat C."/>
            <person name="Karoui M.E."/>
            <person name="Frapy E."/>
            <person name="Garry L."/>
            <person name="Ghigo J.M."/>
            <person name="Gilles A.M."/>
            <person name="Johnson J."/>
            <person name="Le Bouguenec C."/>
            <person name="Lescat M."/>
            <person name="Mangenot S."/>
            <person name="Martinez-Jehanne V."/>
            <person name="Matic I."/>
            <person name="Nassif X."/>
            <person name="Oztas S."/>
            <person name="Petit M.A."/>
            <person name="Pichon C."/>
            <person name="Rouy Z."/>
            <person name="Ruf C.S."/>
            <person name="Schneider D."/>
            <person name="Tourret J."/>
            <person name="Vacherie B."/>
            <person name="Vallenet D."/>
            <person name="Medigue C."/>
            <person name="Rocha E.P.C."/>
            <person name="Denamur E."/>
        </authorList>
    </citation>
    <scope>NUCLEOTIDE SEQUENCE [LARGE SCALE GENOMIC DNA]</scope>
    <source>
        <strain>ED1a</strain>
    </source>
</reference>
<organism>
    <name type="scientific">Escherichia coli O81 (strain ED1a)</name>
    <dbReference type="NCBI Taxonomy" id="585397"/>
    <lineage>
        <taxon>Bacteria</taxon>
        <taxon>Pseudomonadati</taxon>
        <taxon>Pseudomonadota</taxon>
        <taxon>Gammaproteobacteria</taxon>
        <taxon>Enterobacterales</taxon>
        <taxon>Enterobacteriaceae</taxon>
        <taxon>Escherichia</taxon>
    </lineage>
</organism>
<proteinExistence type="inferred from homology"/>
<gene>
    <name evidence="1" type="primary">nfuA</name>
    <name type="ordered locus">ECED1_4075</name>
</gene>
<dbReference type="EMBL" id="CU928162">
    <property type="protein sequence ID" value="CAR10065.1"/>
    <property type="molecule type" value="Genomic_DNA"/>
</dbReference>
<dbReference type="RefSeq" id="WP_000619389.1">
    <property type="nucleotide sequence ID" value="NC_011745.1"/>
</dbReference>
<dbReference type="SMR" id="B7N147"/>
<dbReference type="GeneID" id="93778582"/>
<dbReference type="KEGG" id="ecq:ECED1_4075"/>
<dbReference type="HOGENOM" id="CLU_094569_0_0_6"/>
<dbReference type="Proteomes" id="UP000000748">
    <property type="component" value="Chromosome"/>
</dbReference>
<dbReference type="GO" id="GO:0051539">
    <property type="term" value="F:4 iron, 4 sulfur cluster binding"/>
    <property type="evidence" value="ECO:0007669"/>
    <property type="project" value="UniProtKB-UniRule"/>
</dbReference>
<dbReference type="GO" id="GO:0005506">
    <property type="term" value="F:iron ion binding"/>
    <property type="evidence" value="ECO:0007669"/>
    <property type="project" value="InterPro"/>
</dbReference>
<dbReference type="GO" id="GO:0016226">
    <property type="term" value="P:iron-sulfur cluster assembly"/>
    <property type="evidence" value="ECO:0007669"/>
    <property type="project" value="UniProtKB-UniRule"/>
</dbReference>
<dbReference type="GO" id="GO:0051604">
    <property type="term" value="P:protein maturation"/>
    <property type="evidence" value="ECO:0007669"/>
    <property type="project" value="UniProtKB-UniRule"/>
</dbReference>
<dbReference type="FunFam" id="2.60.300.12:FF:000004">
    <property type="entry name" value="Fe/S biogenesis protein NfuA"/>
    <property type="match status" value="1"/>
</dbReference>
<dbReference type="FunFam" id="3.30.300.130:FF:000002">
    <property type="entry name" value="Fe/S biogenesis protein NfuA"/>
    <property type="match status" value="1"/>
</dbReference>
<dbReference type="Gene3D" id="3.30.300.130">
    <property type="entry name" value="Fe-S cluster assembly (FSCA)"/>
    <property type="match status" value="1"/>
</dbReference>
<dbReference type="Gene3D" id="2.60.300.12">
    <property type="entry name" value="HesB-like domain"/>
    <property type="match status" value="1"/>
</dbReference>
<dbReference type="HAMAP" id="MF_01637">
    <property type="entry name" value="Fe_S_biogen_NfuA"/>
    <property type="match status" value="1"/>
</dbReference>
<dbReference type="InterPro" id="IPR017726">
    <property type="entry name" value="Fe/S_biogenesis_protein_NfuA"/>
</dbReference>
<dbReference type="InterPro" id="IPR000361">
    <property type="entry name" value="FeS_biogenesis"/>
</dbReference>
<dbReference type="InterPro" id="IPR034904">
    <property type="entry name" value="FSCA_dom_sf"/>
</dbReference>
<dbReference type="InterPro" id="IPR035903">
    <property type="entry name" value="HesB-like_dom_sf"/>
</dbReference>
<dbReference type="InterPro" id="IPR001075">
    <property type="entry name" value="NIF_FeS_clus_asmbl_NifU_C"/>
</dbReference>
<dbReference type="NCBIfam" id="NF008392">
    <property type="entry name" value="PRK11190.1"/>
    <property type="match status" value="1"/>
</dbReference>
<dbReference type="NCBIfam" id="TIGR03341">
    <property type="entry name" value="YhgI_GntY"/>
    <property type="match status" value="1"/>
</dbReference>
<dbReference type="PANTHER" id="PTHR11178:SF51">
    <property type="entry name" value="FE_S BIOGENESIS PROTEIN NFUA"/>
    <property type="match status" value="1"/>
</dbReference>
<dbReference type="PANTHER" id="PTHR11178">
    <property type="entry name" value="IRON-SULFUR CLUSTER SCAFFOLD PROTEIN NFU-RELATED"/>
    <property type="match status" value="1"/>
</dbReference>
<dbReference type="Pfam" id="PF01521">
    <property type="entry name" value="Fe-S_biosyn"/>
    <property type="match status" value="1"/>
</dbReference>
<dbReference type="Pfam" id="PF01106">
    <property type="entry name" value="NifU"/>
    <property type="match status" value="1"/>
</dbReference>
<dbReference type="SUPFAM" id="SSF117916">
    <property type="entry name" value="Fe-S cluster assembly (FSCA) domain-like"/>
    <property type="match status" value="1"/>
</dbReference>
<dbReference type="SUPFAM" id="SSF89360">
    <property type="entry name" value="HesB-like domain"/>
    <property type="match status" value="1"/>
</dbReference>
<evidence type="ECO:0000255" key="1">
    <source>
        <dbReference type="HAMAP-Rule" id="MF_01637"/>
    </source>
</evidence>
<keyword id="KW-0004">4Fe-4S</keyword>
<keyword id="KW-0408">Iron</keyword>
<keyword id="KW-0411">Iron-sulfur</keyword>
<keyword id="KW-0479">Metal-binding</keyword>
<sequence>MIRISDAAQAHFAKLLANQEEGTQIRVFVINPGTPNAECGVSYCPPDAVEATDTALKFDLLTAYVDELSAPYLEDAEIDFVTDQLGSQLTLKAPNAKMRKVADDAPLMERVEYMLQSQINPQLAGHGGRVSLMEITEDGYAILQFGGGCNGCSMVDVTLKEGIEKQLLNEFPELKGVRDLTEHQRGEHSYY</sequence>
<accession>B7N147</accession>